<organism>
    <name type="scientific">Bradyrhizobium sp. (strain ORS 278)</name>
    <dbReference type="NCBI Taxonomy" id="114615"/>
    <lineage>
        <taxon>Bacteria</taxon>
        <taxon>Pseudomonadati</taxon>
        <taxon>Pseudomonadota</taxon>
        <taxon>Alphaproteobacteria</taxon>
        <taxon>Hyphomicrobiales</taxon>
        <taxon>Nitrobacteraceae</taxon>
        <taxon>Bradyrhizobium</taxon>
    </lineage>
</organism>
<evidence type="ECO:0000255" key="1">
    <source>
        <dbReference type="HAMAP-Rule" id="MF_00600"/>
    </source>
</evidence>
<keyword id="KW-0067">ATP-binding</keyword>
<keyword id="KW-0143">Chaperone</keyword>
<keyword id="KW-0963">Cytoplasm</keyword>
<keyword id="KW-0413">Isomerase</keyword>
<keyword id="KW-0547">Nucleotide-binding</keyword>
<keyword id="KW-1185">Reference proteome</keyword>
<accession>A4Z0U1</accession>
<name>CH603_BRASO</name>
<comment type="function">
    <text evidence="1">Together with its co-chaperonin GroES, plays an essential role in assisting protein folding. The GroEL-GroES system forms a nano-cage that allows encapsulation of the non-native substrate proteins and provides a physical environment optimized to promote and accelerate protein folding.</text>
</comment>
<comment type="catalytic activity">
    <reaction evidence="1">
        <text>ATP + H2O + a folded polypeptide = ADP + phosphate + an unfolded polypeptide.</text>
        <dbReference type="EC" id="5.6.1.7"/>
    </reaction>
</comment>
<comment type="subunit">
    <text evidence="1">Forms a cylinder of 14 subunits composed of two heptameric rings stacked back-to-back. Interacts with the co-chaperonin GroES.</text>
</comment>
<comment type="subcellular location">
    <subcellularLocation>
        <location evidence="1">Cytoplasm</location>
    </subcellularLocation>
</comment>
<comment type="similarity">
    <text evidence="1">Belongs to the chaperonin (HSP60) family.</text>
</comment>
<sequence length="547" mass="57506">MAAKDVKFSGDARDRMLRGVDILANAVKVTLGPKGRNVVIEKSFGAPRITKDGVTVAKEIELEDKFENMGAQMLREVASKTNDLAGDGTTTATVLAQAIVREGAKAVAAGMNPMDLKRGIDTAVAAVIKDIEKRAKPVASSAEVAQVGTISANGDAAIGKMIAQAMQKVGNEGVITVEENKSLETEVDIVEGMKFDRGYLSPYFVTNAEKMTAELDDVYVLLHEKKLSGLQAMLPVLEAVVQSGRPLLIIAEDVEGEALATLVVNRLRGGLKVAAVKAPGFGDRRKAMLEDIAILTGGQLISDDLGMKLENVTIKMLGRAKKVVIDKENTTIVNGAGKKADIEARVGQIKAQIEETTSDYDREKLQERLAKLAGGVAVIRVGGATEVEVKEKKDRVEDALNATRAAVQEGIVPGGGVALLRAKKAVGRITNPNSDVQAGINIVLKALEAPMRQIAENAGVEGSIVVGKILEEKSETFGFDAQTEDYVDMVAKGIIDPAKVVRTALQDASSVAGLLVTTEAMVAELPKDAAPAMPAGGGMGGMGGMGF</sequence>
<proteinExistence type="inferred from homology"/>
<feature type="chain" id="PRO_0000331980" description="Chaperonin GroEL 3">
    <location>
        <begin position="1"/>
        <end position="547"/>
    </location>
</feature>
<feature type="binding site" evidence="1">
    <location>
        <begin position="30"/>
        <end position="33"/>
    </location>
    <ligand>
        <name>ATP</name>
        <dbReference type="ChEBI" id="CHEBI:30616"/>
    </ligand>
</feature>
<feature type="binding site" evidence="1">
    <location>
        <position position="51"/>
    </location>
    <ligand>
        <name>ATP</name>
        <dbReference type="ChEBI" id="CHEBI:30616"/>
    </ligand>
</feature>
<feature type="binding site" evidence="1">
    <location>
        <begin position="87"/>
        <end position="91"/>
    </location>
    <ligand>
        <name>ATP</name>
        <dbReference type="ChEBI" id="CHEBI:30616"/>
    </ligand>
</feature>
<feature type="binding site" evidence="1">
    <location>
        <position position="415"/>
    </location>
    <ligand>
        <name>ATP</name>
        <dbReference type="ChEBI" id="CHEBI:30616"/>
    </ligand>
</feature>
<feature type="binding site" evidence="1">
    <location>
        <position position="496"/>
    </location>
    <ligand>
        <name>ATP</name>
        <dbReference type="ChEBI" id="CHEBI:30616"/>
    </ligand>
</feature>
<protein>
    <recommendedName>
        <fullName evidence="1">Chaperonin GroEL 3</fullName>
        <ecNumber evidence="1">5.6.1.7</ecNumber>
    </recommendedName>
    <alternativeName>
        <fullName evidence="1">60 kDa chaperonin 3</fullName>
    </alternativeName>
    <alternativeName>
        <fullName evidence="1">Chaperonin-60 3</fullName>
        <shortName evidence="1">Cpn60 3</shortName>
    </alternativeName>
</protein>
<gene>
    <name evidence="1" type="primary">groEL3</name>
    <name evidence="1" type="synonym">groL3</name>
    <name type="ordered locus">BRADO6115</name>
</gene>
<reference key="1">
    <citation type="journal article" date="2007" name="Science">
        <title>Legumes symbioses: absence of nod genes in photosynthetic bradyrhizobia.</title>
        <authorList>
            <person name="Giraud E."/>
            <person name="Moulin L."/>
            <person name="Vallenet D."/>
            <person name="Barbe V."/>
            <person name="Cytryn E."/>
            <person name="Avarre J.-C."/>
            <person name="Jaubert M."/>
            <person name="Simon D."/>
            <person name="Cartieaux F."/>
            <person name="Prin Y."/>
            <person name="Bena G."/>
            <person name="Hannibal L."/>
            <person name="Fardoux J."/>
            <person name="Kojadinovic M."/>
            <person name="Vuillet L."/>
            <person name="Lajus A."/>
            <person name="Cruveiller S."/>
            <person name="Rouy Z."/>
            <person name="Mangenot S."/>
            <person name="Segurens B."/>
            <person name="Dossat C."/>
            <person name="Franck W.L."/>
            <person name="Chang W.-S."/>
            <person name="Saunders E."/>
            <person name="Bruce D."/>
            <person name="Richardson P."/>
            <person name="Normand P."/>
            <person name="Dreyfus B."/>
            <person name="Pignol D."/>
            <person name="Stacey G."/>
            <person name="Emerich D."/>
            <person name="Vermeglio A."/>
            <person name="Medigue C."/>
            <person name="Sadowsky M."/>
        </authorList>
    </citation>
    <scope>NUCLEOTIDE SEQUENCE [LARGE SCALE GENOMIC DNA]</scope>
    <source>
        <strain>ORS 278</strain>
    </source>
</reference>
<dbReference type="EC" id="5.6.1.7" evidence="1"/>
<dbReference type="EMBL" id="CU234118">
    <property type="protein sequence ID" value="CAL79767.1"/>
    <property type="molecule type" value="Genomic_DNA"/>
</dbReference>
<dbReference type="RefSeq" id="WP_012029656.1">
    <property type="nucleotide sequence ID" value="NC_009445.1"/>
</dbReference>
<dbReference type="SMR" id="A4Z0U1"/>
<dbReference type="STRING" id="114615.BRADO6115"/>
<dbReference type="KEGG" id="bra:BRADO6115"/>
<dbReference type="eggNOG" id="COG0459">
    <property type="taxonomic scope" value="Bacteria"/>
</dbReference>
<dbReference type="HOGENOM" id="CLU_016503_3_0_5"/>
<dbReference type="OrthoDB" id="9766614at2"/>
<dbReference type="Proteomes" id="UP000001994">
    <property type="component" value="Chromosome"/>
</dbReference>
<dbReference type="GO" id="GO:0005737">
    <property type="term" value="C:cytoplasm"/>
    <property type="evidence" value="ECO:0007669"/>
    <property type="project" value="UniProtKB-SubCell"/>
</dbReference>
<dbReference type="GO" id="GO:0005524">
    <property type="term" value="F:ATP binding"/>
    <property type="evidence" value="ECO:0007669"/>
    <property type="project" value="UniProtKB-UniRule"/>
</dbReference>
<dbReference type="GO" id="GO:0140662">
    <property type="term" value="F:ATP-dependent protein folding chaperone"/>
    <property type="evidence" value="ECO:0007669"/>
    <property type="project" value="InterPro"/>
</dbReference>
<dbReference type="GO" id="GO:0016853">
    <property type="term" value="F:isomerase activity"/>
    <property type="evidence" value="ECO:0007669"/>
    <property type="project" value="UniProtKB-KW"/>
</dbReference>
<dbReference type="GO" id="GO:0051082">
    <property type="term" value="F:unfolded protein binding"/>
    <property type="evidence" value="ECO:0007669"/>
    <property type="project" value="UniProtKB-UniRule"/>
</dbReference>
<dbReference type="GO" id="GO:0042026">
    <property type="term" value="P:protein refolding"/>
    <property type="evidence" value="ECO:0007669"/>
    <property type="project" value="UniProtKB-UniRule"/>
</dbReference>
<dbReference type="CDD" id="cd03344">
    <property type="entry name" value="GroEL"/>
    <property type="match status" value="1"/>
</dbReference>
<dbReference type="FunFam" id="1.10.560.10:FF:000001">
    <property type="entry name" value="60 kDa chaperonin"/>
    <property type="match status" value="1"/>
</dbReference>
<dbReference type="FunFam" id="3.50.7.10:FF:000001">
    <property type="entry name" value="60 kDa chaperonin"/>
    <property type="match status" value="1"/>
</dbReference>
<dbReference type="Gene3D" id="3.50.7.10">
    <property type="entry name" value="GroEL"/>
    <property type="match status" value="1"/>
</dbReference>
<dbReference type="Gene3D" id="1.10.560.10">
    <property type="entry name" value="GroEL-like equatorial domain"/>
    <property type="match status" value="1"/>
</dbReference>
<dbReference type="Gene3D" id="3.30.260.10">
    <property type="entry name" value="TCP-1-like chaperonin intermediate domain"/>
    <property type="match status" value="1"/>
</dbReference>
<dbReference type="HAMAP" id="MF_00600">
    <property type="entry name" value="CH60"/>
    <property type="match status" value="1"/>
</dbReference>
<dbReference type="InterPro" id="IPR018370">
    <property type="entry name" value="Chaperonin_Cpn60_CS"/>
</dbReference>
<dbReference type="InterPro" id="IPR001844">
    <property type="entry name" value="Cpn60/GroEL"/>
</dbReference>
<dbReference type="InterPro" id="IPR002423">
    <property type="entry name" value="Cpn60/GroEL/TCP-1"/>
</dbReference>
<dbReference type="InterPro" id="IPR027409">
    <property type="entry name" value="GroEL-like_apical_dom_sf"/>
</dbReference>
<dbReference type="InterPro" id="IPR027413">
    <property type="entry name" value="GROEL-like_equatorial_sf"/>
</dbReference>
<dbReference type="InterPro" id="IPR027410">
    <property type="entry name" value="TCP-1-like_intermed_sf"/>
</dbReference>
<dbReference type="NCBIfam" id="TIGR02348">
    <property type="entry name" value="GroEL"/>
    <property type="match status" value="1"/>
</dbReference>
<dbReference type="NCBIfam" id="NF000592">
    <property type="entry name" value="PRK00013.1"/>
    <property type="match status" value="1"/>
</dbReference>
<dbReference type="NCBIfam" id="NF009487">
    <property type="entry name" value="PRK12849.1"/>
    <property type="match status" value="1"/>
</dbReference>
<dbReference type="NCBIfam" id="NF009488">
    <property type="entry name" value="PRK12850.1"/>
    <property type="match status" value="1"/>
</dbReference>
<dbReference type="NCBIfam" id="NF009489">
    <property type="entry name" value="PRK12851.1"/>
    <property type="match status" value="1"/>
</dbReference>
<dbReference type="PANTHER" id="PTHR45633">
    <property type="entry name" value="60 KDA HEAT SHOCK PROTEIN, MITOCHONDRIAL"/>
    <property type="match status" value="1"/>
</dbReference>
<dbReference type="Pfam" id="PF00118">
    <property type="entry name" value="Cpn60_TCP1"/>
    <property type="match status" value="1"/>
</dbReference>
<dbReference type="PRINTS" id="PR00298">
    <property type="entry name" value="CHAPERONIN60"/>
</dbReference>
<dbReference type="SUPFAM" id="SSF52029">
    <property type="entry name" value="GroEL apical domain-like"/>
    <property type="match status" value="1"/>
</dbReference>
<dbReference type="SUPFAM" id="SSF48592">
    <property type="entry name" value="GroEL equatorial domain-like"/>
    <property type="match status" value="1"/>
</dbReference>
<dbReference type="SUPFAM" id="SSF54849">
    <property type="entry name" value="GroEL-intermediate domain like"/>
    <property type="match status" value="1"/>
</dbReference>
<dbReference type="PROSITE" id="PS00296">
    <property type="entry name" value="CHAPERONINS_CPN60"/>
    <property type="match status" value="1"/>
</dbReference>